<sequence>MEKEMEDKEEFDEGEIEYTSYAGEHHLPLIMSLVDQELSEPYSIFTYRYFVYLWPQLCFLAFHKGKCVGTIVCKMGDHRQTFRGYIAMLVVIKPYRGRGIASELVTRAIKAMMESGCEEVTLEAEVSNKGALALYGRLGFIRAKRLYHYYLNGMDAFRLKLLFPKPRVPQIPSQVQTQQEYETFPRPRVP</sequence>
<feature type="chain" id="PRO_0000423402" description="N-alpha-acetyltransferase MAK3">
    <location>
        <begin position="1"/>
        <end position="190"/>
    </location>
</feature>
<feature type="domain" description="N-acetyltransferase" evidence="1">
    <location>
        <begin position="16"/>
        <end position="164"/>
    </location>
</feature>
<comment type="function">
    <text evidence="2">Probably required for N-acetylation of some chloroplast precursor proteins and efficient accumulation of thylakoid multiprotein complexes. In yeast, can replace the NatC complex (composed of MAK3, MAK10 and MAK31) by acetylating N termini of endogenous proteins and the N-terminus Met of L-A virus Gag protein. However, the formation of a NatC complex is not required for this function.</text>
</comment>
<comment type="catalytic activity">
    <reaction evidence="3">
        <text>N-terminal L-methionyl-L-leucyl-[protein] + acetyl-CoA = N-terminal N(alpha)-acetyl-L-methionyl-L-leucyl-[protein] + CoA + H(+)</text>
        <dbReference type="Rhea" id="RHEA:50520"/>
        <dbReference type="Rhea" id="RHEA-COMP:12711"/>
        <dbReference type="Rhea" id="RHEA-COMP:12712"/>
        <dbReference type="ChEBI" id="CHEBI:15378"/>
        <dbReference type="ChEBI" id="CHEBI:57287"/>
        <dbReference type="ChEBI" id="CHEBI:57288"/>
        <dbReference type="ChEBI" id="CHEBI:133377"/>
        <dbReference type="ChEBI" id="CHEBI:133378"/>
        <dbReference type="EC" id="2.3.1.256"/>
    </reaction>
</comment>
<comment type="catalytic activity">
    <reaction evidence="3">
        <text>N-terminal L-methionyl-L-isoleucyl-[protein] + acetyl-CoA = N-terminal N(alpha)-acetyl-L-methionyl-L-isoleucyl-[protein] + CoA + H(+)</text>
        <dbReference type="Rhea" id="RHEA:50524"/>
        <dbReference type="Rhea" id="RHEA-COMP:12713"/>
        <dbReference type="Rhea" id="RHEA-COMP:12714"/>
        <dbReference type="ChEBI" id="CHEBI:15378"/>
        <dbReference type="ChEBI" id="CHEBI:57287"/>
        <dbReference type="ChEBI" id="CHEBI:57288"/>
        <dbReference type="ChEBI" id="CHEBI:133379"/>
        <dbReference type="ChEBI" id="CHEBI:133380"/>
        <dbReference type="EC" id="2.3.1.256"/>
    </reaction>
</comment>
<comment type="catalytic activity">
    <reaction evidence="3">
        <text>N-terminal L-methionyl-L-phenylalanyl-[protein] + acetyl-CoA = N-terminal N(alpha)-acetyl-L-methionyl-L-phenylalanyl-[protein] + CoA + H(+)</text>
        <dbReference type="Rhea" id="RHEA:50528"/>
        <dbReference type="Rhea" id="RHEA-COMP:12715"/>
        <dbReference type="Rhea" id="RHEA-COMP:12716"/>
        <dbReference type="ChEBI" id="CHEBI:15378"/>
        <dbReference type="ChEBI" id="CHEBI:57287"/>
        <dbReference type="ChEBI" id="CHEBI:57288"/>
        <dbReference type="ChEBI" id="CHEBI:133382"/>
        <dbReference type="ChEBI" id="CHEBI:133383"/>
        <dbReference type="EC" id="2.3.1.256"/>
    </reaction>
</comment>
<comment type="catalytic activity">
    <reaction evidence="3">
        <text>N-terminal L-methionyl-L-tryptophyl-[protein] + acetyl-CoA = N-terminal N(alpha)-acetyl-L-methionyl-L-tryptophyl-[protein] + CoA + H(+)</text>
        <dbReference type="Rhea" id="RHEA:50560"/>
        <dbReference type="Rhea" id="RHEA-COMP:12724"/>
        <dbReference type="Rhea" id="RHEA-COMP:12725"/>
        <dbReference type="ChEBI" id="CHEBI:15378"/>
        <dbReference type="ChEBI" id="CHEBI:57287"/>
        <dbReference type="ChEBI" id="CHEBI:57288"/>
        <dbReference type="ChEBI" id="CHEBI:133386"/>
        <dbReference type="ChEBI" id="CHEBI:133387"/>
        <dbReference type="EC" id="2.3.1.256"/>
    </reaction>
</comment>
<comment type="catalytic activity">
    <reaction evidence="3">
        <text>N-terminal L-methionyl-L-tyrosyl-[protein] + acetyl-CoA = N-terminal N(alpha)-acetyl-L-methionyl-L-tyrosyl-[protein] + CoA + H(+)</text>
        <dbReference type="Rhea" id="RHEA:50532"/>
        <dbReference type="Rhea" id="RHEA-COMP:12717"/>
        <dbReference type="Rhea" id="RHEA-COMP:12718"/>
        <dbReference type="ChEBI" id="CHEBI:15378"/>
        <dbReference type="ChEBI" id="CHEBI:57287"/>
        <dbReference type="ChEBI" id="CHEBI:57288"/>
        <dbReference type="ChEBI" id="CHEBI:133384"/>
        <dbReference type="ChEBI" id="CHEBI:133385"/>
        <dbReference type="EC" id="2.3.1.256"/>
    </reaction>
</comment>
<comment type="interaction">
    <interactant intactId="EBI-15205450">
        <id>O80438</id>
    </interactant>
    <interactant intactId="EBI-621986">
        <id>Q9SZJ6</id>
        <label>AGL21</label>
    </interactant>
    <organismsDiffer>false</organismsDiffer>
    <experiments>3</experiments>
</comment>
<comment type="interaction">
    <interactant intactId="EBI-15205450">
        <id>O80438</id>
    </interactant>
    <interactant intactId="EBI-4475455">
        <id>Q9FG01</id>
        <label>ATO</label>
    </interactant>
    <organismsDiffer>false</organismsDiffer>
    <experiments>3</experiments>
</comment>
<comment type="interaction">
    <interactant intactId="EBI-15205450">
        <id>O80438</id>
    </interactant>
    <interactant intactId="EBI-962511">
        <id>A9LNK9</id>
        <label>CPSF30</label>
    </interactant>
    <organismsDiffer>false</organismsDiffer>
    <experiments>3</experiments>
</comment>
<comment type="interaction">
    <interactant intactId="EBI-15205450">
        <id>O80438</id>
    </interactant>
    <interactant intactId="EBI-4424563">
        <id>Q93Z00</id>
        <label>TCP14</label>
    </interactant>
    <organismsDiffer>false</organismsDiffer>
    <experiments>4</experiments>
</comment>
<comment type="interaction">
    <interactant intactId="EBI-15205450">
        <id>O80438</id>
    </interactant>
    <interactant intactId="EBI-15192325">
        <id>Q8LPR5</id>
        <label>TCP4</label>
    </interactant>
    <organismsDiffer>false</organismsDiffer>
    <experiments>3</experiments>
</comment>
<comment type="subcellular location">
    <subcellularLocation>
        <location evidence="2">Cytoplasm</location>
    </subcellularLocation>
</comment>
<comment type="tissue specificity">
    <text evidence="2">Expressed in roots, leaves, flowers and siliques.</text>
</comment>
<comment type="disruption phenotype">
    <text evidence="2">Reduced plant size and pale-green leaves due to decreased chlorophyll concentration.</text>
</comment>
<comment type="similarity">
    <text evidence="4">Belongs to the acetyltransferase family. MAK3 subfamily.</text>
</comment>
<accession>O80438</accession>
<organism>
    <name type="scientific">Arabidopsis thaliana</name>
    <name type="common">Mouse-ear cress</name>
    <dbReference type="NCBI Taxonomy" id="3702"/>
    <lineage>
        <taxon>Eukaryota</taxon>
        <taxon>Viridiplantae</taxon>
        <taxon>Streptophyta</taxon>
        <taxon>Embryophyta</taxon>
        <taxon>Tracheophyta</taxon>
        <taxon>Spermatophyta</taxon>
        <taxon>Magnoliopsida</taxon>
        <taxon>eudicotyledons</taxon>
        <taxon>Gunneridae</taxon>
        <taxon>Pentapetalae</taxon>
        <taxon>rosids</taxon>
        <taxon>malvids</taxon>
        <taxon>Brassicales</taxon>
        <taxon>Brassicaceae</taxon>
        <taxon>Camelineae</taxon>
        <taxon>Arabidopsis</taxon>
    </lineage>
</organism>
<name>MAK3_ARATH</name>
<protein>
    <recommendedName>
        <fullName>N-alpha-acetyltransferase MAK3</fullName>
        <ecNumber evidence="3">2.3.1.256</ecNumber>
    </recommendedName>
    <alternativeName>
        <fullName>N-acetyltransferase MAK3 homolog</fullName>
        <shortName>AtMAK3</shortName>
    </alternativeName>
    <alternativeName>
        <fullName>Protein PHOTOSYNTHESIS ALTERED MUTANT 21</fullName>
    </alternativeName>
</protein>
<keyword id="KW-0012">Acyltransferase</keyword>
<keyword id="KW-0963">Cytoplasm</keyword>
<keyword id="KW-1185">Reference proteome</keyword>
<keyword id="KW-0808">Transferase</keyword>
<gene>
    <name type="primary">MAK3</name>
    <name type="synonym">PAM21</name>
    <name type="ordered locus">At2g38130</name>
    <name type="ORF">F16M14.6</name>
</gene>
<reference key="1">
    <citation type="journal article" date="1999" name="Nature">
        <title>Sequence and analysis of chromosome 2 of the plant Arabidopsis thaliana.</title>
        <authorList>
            <person name="Lin X."/>
            <person name="Kaul S."/>
            <person name="Rounsley S.D."/>
            <person name="Shea T.P."/>
            <person name="Benito M.-I."/>
            <person name="Town C.D."/>
            <person name="Fujii C.Y."/>
            <person name="Mason T.M."/>
            <person name="Bowman C.L."/>
            <person name="Barnstead M.E."/>
            <person name="Feldblyum T.V."/>
            <person name="Buell C.R."/>
            <person name="Ketchum K.A."/>
            <person name="Lee J.J."/>
            <person name="Ronning C.M."/>
            <person name="Koo H.L."/>
            <person name="Moffat K.S."/>
            <person name="Cronin L.A."/>
            <person name="Shen M."/>
            <person name="Pai G."/>
            <person name="Van Aken S."/>
            <person name="Umayam L."/>
            <person name="Tallon L.J."/>
            <person name="Gill J.E."/>
            <person name="Adams M.D."/>
            <person name="Carrera A.J."/>
            <person name="Creasy T.H."/>
            <person name="Goodman H.M."/>
            <person name="Somerville C.R."/>
            <person name="Copenhaver G.P."/>
            <person name="Preuss D."/>
            <person name="Nierman W.C."/>
            <person name="White O."/>
            <person name="Eisen J.A."/>
            <person name="Salzberg S.L."/>
            <person name="Fraser C.M."/>
            <person name="Venter J.C."/>
        </authorList>
    </citation>
    <scope>NUCLEOTIDE SEQUENCE [LARGE SCALE GENOMIC DNA]</scope>
    <source>
        <strain>cv. Columbia</strain>
    </source>
</reference>
<reference key="2">
    <citation type="journal article" date="2017" name="Plant J.">
        <title>Araport11: a complete reannotation of the Arabidopsis thaliana reference genome.</title>
        <authorList>
            <person name="Cheng C.Y."/>
            <person name="Krishnakumar V."/>
            <person name="Chan A.P."/>
            <person name="Thibaud-Nissen F."/>
            <person name="Schobel S."/>
            <person name="Town C.D."/>
        </authorList>
    </citation>
    <scope>GENOME REANNOTATION</scope>
    <source>
        <strain>cv. Columbia</strain>
    </source>
</reference>
<reference key="3">
    <citation type="submission" date="2004-05" db="EMBL/GenBank/DDBJ databases">
        <title>Arabidopsis ORF clones.</title>
        <authorList>
            <person name="Cheuk R.F."/>
            <person name="Chen H."/>
            <person name="Kim C.J."/>
            <person name="Shinn P."/>
            <person name="Ecker J.R."/>
        </authorList>
    </citation>
    <scope>NUCLEOTIDE SEQUENCE [LARGE SCALE MRNA]</scope>
    <source>
        <strain>cv. Columbia</strain>
    </source>
</reference>
<reference key="4">
    <citation type="submission" date="2006-07" db="EMBL/GenBank/DDBJ databases">
        <title>Large-scale analysis of RIKEN Arabidopsis full-length (RAFL) cDNAs.</title>
        <authorList>
            <person name="Totoki Y."/>
            <person name="Seki M."/>
            <person name="Ishida J."/>
            <person name="Nakajima M."/>
            <person name="Enju A."/>
            <person name="Kamiya A."/>
            <person name="Narusaka M."/>
            <person name="Shin-i T."/>
            <person name="Nakagawa M."/>
            <person name="Sakamoto N."/>
            <person name="Oishi K."/>
            <person name="Kohara Y."/>
            <person name="Kobayashi M."/>
            <person name="Toyoda A."/>
            <person name="Sakaki Y."/>
            <person name="Sakurai T."/>
            <person name="Iida K."/>
            <person name="Akiyama K."/>
            <person name="Satou M."/>
            <person name="Toyoda T."/>
            <person name="Konagaya A."/>
            <person name="Carninci P."/>
            <person name="Kawai J."/>
            <person name="Hayashizaki Y."/>
            <person name="Shinozaki K."/>
        </authorList>
    </citation>
    <scope>NUCLEOTIDE SEQUENCE [LARGE SCALE MRNA]</scope>
    <source>
        <strain>cv. Columbia</strain>
    </source>
</reference>
<reference key="5">
    <citation type="journal article" date="2003" name="Plant Cell">
        <title>Cytoplasmic N-terminal protein acetylation is required for efficient photosynthesis in Arabidopsis.</title>
        <authorList>
            <person name="Pesaresi P."/>
            <person name="Gardner N.A."/>
            <person name="Masiero S."/>
            <person name="Dietzmann A."/>
            <person name="Eichacker L."/>
            <person name="Wickner R."/>
            <person name="Salamini F."/>
            <person name="Leister D."/>
        </authorList>
    </citation>
    <scope>FUNCTION</scope>
    <scope>SUBCELLULAR LOCATION</scope>
    <scope>TISSUE SPECIFICITY</scope>
    <scope>DISRUPTION PHENOTYPE</scope>
</reference>
<evidence type="ECO:0000255" key="1">
    <source>
        <dbReference type="PROSITE-ProRule" id="PRU00532"/>
    </source>
</evidence>
<evidence type="ECO:0000269" key="2">
    <source>
    </source>
</evidence>
<evidence type="ECO:0000303" key="3">
    <source>
    </source>
</evidence>
<evidence type="ECO:0000305" key="4"/>
<proteinExistence type="evidence at protein level"/>
<dbReference type="EC" id="2.3.1.256" evidence="3"/>
<dbReference type="EMBL" id="AC003028">
    <property type="protein sequence ID" value="AAC27162.1"/>
    <property type="molecule type" value="Genomic_DNA"/>
</dbReference>
<dbReference type="EMBL" id="CP002685">
    <property type="protein sequence ID" value="AEC09492.1"/>
    <property type="molecule type" value="Genomic_DNA"/>
</dbReference>
<dbReference type="EMBL" id="CP002685">
    <property type="protein sequence ID" value="AEC09493.1"/>
    <property type="molecule type" value="Genomic_DNA"/>
</dbReference>
<dbReference type="EMBL" id="BT010841">
    <property type="protein sequence ID" value="AAR24208.1"/>
    <property type="molecule type" value="mRNA"/>
</dbReference>
<dbReference type="EMBL" id="BT012615">
    <property type="protein sequence ID" value="AAT06434.1"/>
    <property type="molecule type" value="mRNA"/>
</dbReference>
<dbReference type="EMBL" id="AK229007">
    <property type="protein sequence ID" value="BAF00894.1"/>
    <property type="molecule type" value="mRNA"/>
</dbReference>
<dbReference type="PIR" id="T01245">
    <property type="entry name" value="T01245"/>
</dbReference>
<dbReference type="RefSeq" id="NP_181348.1">
    <property type="nucleotide sequence ID" value="NM_129369.6"/>
</dbReference>
<dbReference type="RefSeq" id="NP_973629.1">
    <property type="nucleotide sequence ID" value="NM_201900.2"/>
</dbReference>
<dbReference type="SMR" id="O80438"/>
<dbReference type="BioGRID" id="3735">
    <property type="interactions" value="20"/>
</dbReference>
<dbReference type="FunCoup" id="O80438">
    <property type="interactions" value="1012"/>
</dbReference>
<dbReference type="IntAct" id="O80438">
    <property type="interactions" value="20"/>
</dbReference>
<dbReference type="STRING" id="3702.O80438"/>
<dbReference type="PaxDb" id="3702-AT2G38130.1"/>
<dbReference type="ProteomicsDB" id="239040"/>
<dbReference type="DNASU" id="818391"/>
<dbReference type="EnsemblPlants" id="AT2G38130.1">
    <property type="protein sequence ID" value="AT2G38130.1"/>
    <property type="gene ID" value="AT2G38130"/>
</dbReference>
<dbReference type="EnsemblPlants" id="AT2G38130.2">
    <property type="protein sequence ID" value="AT2G38130.2"/>
    <property type="gene ID" value="AT2G38130"/>
</dbReference>
<dbReference type="GeneID" id="818391"/>
<dbReference type="Gramene" id="AT2G38130.1">
    <property type="protein sequence ID" value="AT2G38130.1"/>
    <property type="gene ID" value="AT2G38130"/>
</dbReference>
<dbReference type="Gramene" id="AT2G38130.2">
    <property type="protein sequence ID" value="AT2G38130.2"/>
    <property type="gene ID" value="AT2G38130"/>
</dbReference>
<dbReference type="KEGG" id="ath:AT2G38130"/>
<dbReference type="Araport" id="AT2G38130"/>
<dbReference type="TAIR" id="AT2G38130">
    <property type="gene designation" value="ATMAK3"/>
</dbReference>
<dbReference type="eggNOG" id="KOG3139">
    <property type="taxonomic scope" value="Eukaryota"/>
</dbReference>
<dbReference type="HOGENOM" id="CLU_013985_0_2_1"/>
<dbReference type="InParanoid" id="O80438"/>
<dbReference type="OMA" id="LCIFARH"/>
<dbReference type="PhylomeDB" id="O80438"/>
<dbReference type="PRO" id="PR:O80438"/>
<dbReference type="Proteomes" id="UP000006548">
    <property type="component" value="Chromosome 2"/>
</dbReference>
<dbReference type="ExpressionAtlas" id="O80438">
    <property type="expression patterns" value="baseline and differential"/>
</dbReference>
<dbReference type="GO" id="GO:0005737">
    <property type="term" value="C:cytoplasm"/>
    <property type="evidence" value="ECO:0000314"/>
    <property type="project" value="TAIR"/>
</dbReference>
<dbReference type="GO" id="GO:0120518">
    <property type="term" value="F:protein N-terminal-methionine acetyltransferase activity"/>
    <property type="evidence" value="ECO:0007669"/>
    <property type="project" value="UniProtKB-EC"/>
</dbReference>
<dbReference type="GO" id="GO:0004596">
    <property type="term" value="F:protein-N-terminal amino-acid acetyltransferase activity"/>
    <property type="evidence" value="ECO:0000314"/>
    <property type="project" value="UniProtKB"/>
</dbReference>
<dbReference type="CDD" id="cd04301">
    <property type="entry name" value="NAT_SF"/>
    <property type="match status" value="1"/>
</dbReference>
<dbReference type="FunFam" id="3.40.630.30:FF:000051">
    <property type="entry name" value="N-alpha-acetyltransferase MAK3 isoform A"/>
    <property type="match status" value="1"/>
</dbReference>
<dbReference type="Gene3D" id="3.40.630.30">
    <property type="match status" value="1"/>
</dbReference>
<dbReference type="InterPro" id="IPR016181">
    <property type="entry name" value="Acyl_CoA_acyltransferase"/>
</dbReference>
<dbReference type="InterPro" id="IPR000182">
    <property type="entry name" value="GNAT_dom"/>
</dbReference>
<dbReference type="InterPro" id="IPR044542">
    <property type="entry name" value="NAA30-like"/>
</dbReference>
<dbReference type="PANTHER" id="PTHR45896">
    <property type="entry name" value="N-ALPHA-ACETYLTRANSFERASE 30"/>
    <property type="match status" value="1"/>
</dbReference>
<dbReference type="PANTHER" id="PTHR45896:SF1">
    <property type="entry name" value="N-ALPHA-ACETYLTRANSFERASE 30"/>
    <property type="match status" value="1"/>
</dbReference>
<dbReference type="Pfam" id="PF00583">
    <property type="entry name" value="Acetyltransf_1"/>
    <property type="match status" value="1"/>
</dbReference>
<dbReference type="SUPFAM" id="SSF55729">
    <property type="entry name" value="Acyl-CoA N-acyltransferases (Nat)"/>
    <property type="match status" value="1"/>
</dbReference>
<dbReference type="PROSITE" id="PS51186">
    <property type="entry name" value="GNAT"/>
    <property type="match status" value="1"/>
</dbReference>